<dbReference type="EC" id="3.6.1.26" evidence="1"/>
<dbReference type="EMBL" id="CP001164">
    <property type="protein sequence ID" value="ACI38897.1"/>
    <property type="molecule type" value="Genomic_DNA"/>
</dbReference>
<dbReference type="RefSeq" id="WP_000708998.1">
    <property type="nucleotide sequence ID" value="NC_011353.1"/>
</dbReference>
<dbReference type="SMR" id="B5YZ56"/>
<dbReference type="GeneID" id="93777980"/>
<dbReference type="KEGG" id="ecf:ECH74115_5373"/>
<dbReference type="HOGENOM" id="CLU_077117_0_1_6"/>
<dbReference type="UniPathway" id="UPA00609">
    <property type="reaction ID" value="UER00664"/>
</dbReference>
<dbReference type="GO" id="GO:0005886">
    <property type="term" value="C:plasma membrane"/>
    <property type="evidence" value="ECO:0007669"/>
    <property type="project" value="UniProtKB-SubCell"/>
</dbReference>
<dbReference type="GO" id="GO:0008715">
    <property type="term" value="F:CDP-diacylglycerol diphosphatase activity"/>
    <property type="evidence" value="ECO:0007669"/>
    <property type="project" value="UniProtKB-UniRule"/>
</dbReference>
<dbReference type="GO" id="GO:0046342">
    <property type="term" value="P:CDP-diacylglycerol catabolic process"/>
    <property type="evidence" value="ECO:0007669"/>
    <property type="project" value="UniProtKB-UniRule"/>
</dbReference>
<dbReference type="GO" id="GO:0008654">
    <property type="term" value="P:phospholipid biosynthetic process"/>
    <property type="evidence" value="ECO:0007669"/>
    <property type="project" value="UniProtKB-KW"/>
</dbReference>
<dbReference type="FunFam" id="3.30.428.30:FF:000001">
    <property type="entry name" value="CDP-diacylglycerol pyrophosphatase"/>
    <property type="match status" value="1"/>
</dbReference>
<dbReference type="Gene3D" id="3.30.428.30">
    <property type="entry name" value="HIT family - CDH-like"/>
    <property type="match status" value="1"/>
</dbReference>
<dbReference type="HAMAP" id="MF_00319">
    <property type="entry name" value="Cdh"/>
    <property type="match status" value="1"/>
</dbReference>
<dbReference type="InterPro" id="IPR003763">
    <property type="entry name" value="CDP-diacylglyc_Pase"/>
</dbReference>
<dbReference type="InterPro" id="IPR015993">
    <property type="entry name" value="CDP-diacylglyc_Pase_proteobac"/>
</dbReference>
<dbReference type="InterPro" id="IPR036265">
    <property type="entry name" value="HIT-like_sf"/>
</dbReference>
<dbReference type="NCBIfam" id="TIGR00672">
    <property type="entry name" value="cdh"/>
    <property type="match status" value="1"/>
</dbReference>
<dbReference type="NCBIfam" id="NF003986">
    <property type="entry name" value="PRK05471.1-5"/>
    <property type="match status" value="1"/>
</dbReference>
<dbReference type="NCBIfam" id="NF003987">
    <property type="entry name" value="PRK05471.1-6"/>
    <property type="match status" value="1"/>
</dbReference>
<dbReference type="Pfam" id="PF02611">
    <property type="entry name" value="CDH"/>
    <property type="match status" value="1"/>
</dbReference>
<dbReference type="PIRSF" id="PIRSF001273">
    <property type="entry name" value="CDH"/>
    <property type="match status" value="1"/>
</dbReference>
<dbReference type="SUPFAM" id="SSF54197">
    <property type="entry name" value="HIT-like"/>
    <property type="match status" value="1"/>
</dbReference>
<comment type="catalytic activity">
    <reaction evidence="1">
        <text>a CDP-1,2-diacyl-sn-glycerol + H2O = a 1,2-diacyl-sn-glycero-3-phosphate + CMP + 2 H(+)</text>
        <dbReference type="Rhea" id="RHEA:15221"/>
        <dbReference type="ChEBI" id="CHEBI:15377"/>
        <dbReference type="ChEBI" id="CHEBI:15378"/>
        <dbReference type="ChEBI" id="CHEBI:58332"/>
        <dbReference type="ChEBI" id="CHEBI:58608"/>
        <dbReference type="ChEBI" id="CHEBI:60377"/>
        <dbReference type="EC" id="3.6.1.26"/>
    </reaction>
</comment>
<comment type="pathway">
    <text evidence="1">Phospholipid metabolism; CDP-diacylglycerol degradation; phosphatidate from CDP-diacylglycerol: step 1/1.</text>
</comment>
<comment type="subcellular location">
    <subcellularLocation>
        <location evidence="1">Cell inner membrane</location>
        <topology evidence="1">Single-pass membrane protein</topology>
    </subcellularLocation>
</comment>
<comment type="similarity">
    <text evidence="1">Belongs to the Cdh family.</text>
</comment>
<evidence type="ECO:0000255" key="1">
    <source>
        <dbReference type="HAMAP-Rule" id="MF_00319"/>
    </source>
</evidence>
<accession>B5YZ56</accession>
<protein>
    <recommendedName>
        <fullName evidence="1">CDP-diacylglycerol pyrophosphatase</fullName>
        <ecNumber evidence="1">3.6.1.26</ecNumber>
    </recommendedName>
    <alternativeName>
        <fullName evidence="1">CDP-diacylglycerol phosphatidylhydrolase</fullName>
    </alternativeName>
    <alternativeName>
        <fullName evidence="1">CDP-diglyceride hydrolase</fullName>
    </alternativeName>
</protein>
<name>CDH_ECO5E</name>
<proteinExistence type="inferred from homology"/>
<gene>
    <name evidence="1" type="primary">cdh</name>
    <name type="ordered locus">ECH74115_5373</name>
</gene>
<feature type="chain" id="PRO_1000115940" description="CDP-diacylglycerol pyrophosphatase">
    <location>
        <begin position="1"/>
        <end position="251"/>
    </location>
</feature>
<feature type="transmembrane region" description="Helical" evidence="1">
    <location>
        <begin position="4"/>
        <end position="24"/>
    </location>
</feature>
<organism>
    <name type="scientific">Escherichia coli O157:H7 (strain EC4115 / EHEC)</name>
    <dbReference type="NCBI Taxonomy" id="444450"/>
    <lineage>
        <taxon>Bacteria</taxon>
        <taxon>Pseudomonadati</taxon>
        <taxon>Pseudomonadota</taxon>
        <taxon>Gammaproteobacteria</taxon>
        <taxon>Enterobacterales</taxon>
        <taxon>Enterobacteriaceae</taxon>
        <taxon>Escherichia</taxon>
    </lineage>
</organism>
<sequence length="251" mass="28383">MKKAGLLFLVMIVIAVVAAGIGYWKLTGEESDTLRKIVLEECLPNQQQNQNPSPCAEVKPNAGYVVLKDLNGPLQYLLMPTYRINGTESPLLTDPSTPNFFWLAWQARDFMSKKYGQPVPDRAVSLAINSRTGRTQNHFHIHISCIRPDVREQLDNNLANISSRWLPLPGGLRGHEYLARRVTESELVQRSPFMMLAEEVPEAREHMGSYGLAMVRQSDNSFVLLATQRNLLTLNRASAEEIQDHQCEILR</sequence>
<keyword id="KW-0997">Cell inner membrane</keyword>
<keyword id="KW-1003">Cell membrane</keyword>
<keyword id="KW-0378">Hydrolase</keyword>
<keyword id="KW-0444">Lipid biosynthesis</keyword>
<keyword id="KW-0443">Lipid metabolism</keyword>
<keyword id="KW-0472">Membrane</keyword>
<keyword id="KW-0594">Phospholipid biosynthesis</keyword>
<keyword id="KW-1208">Phospholipid metabolism</keyword>
<keyword id="KW-0812">Transmembrane</keyword>
<keyword id="KW-1133">Transmembrane helix</keyword>
<reference key="1">
    <citation type="journal article" date="2011" name="Proc. Natl. Acad. Sci. U.S.A.">
        <title>Genomic anatomy of Escherichia coli O157:H7 outbreaks.</title>
        <authorList>
            <person name="Eppinger M."/>
            <person name="Mammel M.K."/>
            <person name="Leclerc J.E."/>
            <person name="Ravel J."/>
            <person name="Cebula T.A."/>
        </authorList>
    </citation>
    <scope>NUCLEOTIDE SEQUENCE [LARGE SCALE GENOMIC DNA]</scope>
    <source>
        <strain>EC4115 / EHEC</strain>
    </source>
</reference>